<gene>
    <name type="ordered locus">PYRAB08750</name>
    <name type="ORF">PAB1780</name>
</gene>
<protein>
    <recommendedName>
        <fullName evidence="1">UPF0310 protein PYRAB08750</fullName>
    </recommendedName>
</protein>
<feature type="chain" id="PRO_0000059637" description="UPF0310 protein PYRAB08750">
    <location>
        <begin position="1"/>
        <end position="142"/>
    </location>
</feature>
<reference key="1">
    <citation type="journal article" date="2003" name="Mol. Microbiol.">
        <title>An integrated analysis of the genome of the hyperthermophilic archaeon Pyrococcus abyssi.</title>
        <authorList>
            <person name="Cohen G.N."/>
            <person name="Barbe V."/>
            <person name="Flament D."/>
            <person name="Galperin M."/>
            <person name="Heilig R."/>
            <person name="Lecompte O."/>
            <person name="Poch O."/>
            <person name="Prieur D."/>
            <person name="Querellou J."/>
            <person name="Ripp R."/>
            <person name="Thierry J.-C."/>
            <person name="Van der Oost J."/>
            <person name="Weissenbach J."/>
            <person name="Zivanovic Y."/>
            <person name="Forterre P."/>
        </authorList>
    </citation>
    <scope>NUCLEOTIDE SEQUENCE [LARGE SCALE GENOMIC DNA]</scope>
    <source>
        <strain>GE5 / Orsay</strain>
    </source>
</reference>
<reference key="2">
    <citation type="journal article" date="2012" name="Curr. Microbiol.">
        <title>Re-annotation of two hyperthermophilic archaea Pyrococcus abyssi GE5 and Pyrococcus furiosus DSM 3638.</title>
        <authorList>
            <person name="Gao J."/>
            <person name="Wang J."/>
        </authorList>
    </citation>
    <scope>GENOME REANNOTATION</scope>
    <source>
        <strain>GE5 / Orsay</strain>
    </source>
</reference>
<comment type="similarity">
    <text evidence="1">Belongs to the UPF0310 family.</text>
</comment>
<name>Y875_PYRAB</name>
<evidence type="ECO:0000255" key="1">
    <source>
        <dbReference type="HAMAP-Rule" id="MF_00771"/>
    </source>
</evidence>
<organism>
    <name type="scientific">Pyrococcus abyssi (strain GE5 / Orsay)</name>
    <dbReference type="NCBI Taxonomy" id="272844"/>
    <lineage>
        <taxon>Archaea</taxon>
        <taxon>Methanobacteriati</taxon>
        <taxon>Methanobacteriota</taxon>
        <taxon>Thermococci</taxon>
        <taxon>Thermococcales</taxon>
        <taxon>Thermococcaceae</taxon>
        <taxon>Pyrococcus</taxon>
    </lineage>
</organism>
<proteinExistence type="inferred from homology"/>
<dbReference type="EMBL" id="AJ248285">
    <property type="protein sequence ID" value="CAB49789.1"/>
    <property type="molecule type" value="Genomic_DNA"/>
</dbReference>
<dbReference type="EMBL" id="HE613800">
    <property type="protein sequence ID" value="CCE70281.1"/>
    <property type="molecule type" value="Genomic_DNA"/>
</dbReference>
<dbReference type="PIR" id="D75134">
    <property type="entry name" value="D75134"/>
</dbReference>
<dbReference type="RefSeq" id="WP_010867998.1">
    <property type="nucleotide sequence ID" value="NC_000868.1"/>
</dbReference>
<dbReference type="SMR" id="Q9V0B5"/>
<dbReference type="STRING" id="272844.PAB1780"/>
<dbReference type="KEGG" id="pab:PAB1780"/>
<dbReference type="PATRIC" id="fig|272844.11.peg.925"/>
<dbReference type="eggNOG" id="arCOG02727">
    <property type="taxonomic scope" value="Archaea"/>
</dbReference>
<dbReference type="HOGENOM" id="CLU_148445_0_0_2"/>
<dbReference type="OrthoDB" id="35872at2157"/>
<dbReference type="PhylomeDB" id="Q9V0B5"/>
<dbReference type="Proteomes" id="UP000000810">
    <property type="component" value="Chromosome"/>
</dbReference>
<dbReference type="Proteomes" id="UP000009139">
    <property type="component" value="Chromosome"/>
</dbReference>
<dbReference type="CDD" id="cd21132">
    <property type="entry name" value="EVE-like"/>
    <property type="match status" value="1"/>
</dbReference>
<dbReference type="Gene3D" id="3.10.590.10">
    <property type="entry name" value="ph1033 like domains"/>
    <property type="match status" value="1"/>
</dbReference>
<dbReference type="HAMAP" id="MF_00771">
    <property type="entry name" value="UPF0310"/>
    <property type="match status" value="1"/>
</dbReference>
<dbReference type="InterPro" id="IPR002740">
    <property type="entry name" value="EVE_domain"/>
</dbReference>
<dbReference type="InterPro" id="IPR015947">
    <property type="entry name" value="PUA-like_sf"/>
</dbReference>
<dbReference type="InterPro" id="IPR022996">
    <property type="entry name" value="UPF0310"/>
</dbReference>
<dbReference type="NCBIfam" id="NF002008">
    <property type="entry name" value="PRK00809.1"/>
    <property type="match status" value="1"/>
</dbReference>
<dbReference type="PANTHER" id="PTHR39661">
    <property type="entry name" value="UPF0310 PROTEIN MJECL36"/>
    <property type="match status" value="1"/>
</dbReference>
<dbReference type="PANTHER" id="PTHR39661:SF1">
    <property type="entry name" value="UPF0310 PROTEIN MJECL36"/>
    <property type="match status" value="1"/>
</dbReference>
<dbReference type="Pfam" id="PF01878">
    <property type="entry name" value="EVE"/>
    <property type="match status" value="1"/>
</dbReference>
<dbReference type="SUPFAM" id="SSF88697">
    <property type="entry name" value="PUA domain-like"/>
    <property type="match status" value="1"/>
</dbReference>
<accession>Q9V0B5</accession>
<accession>G8ZI40</accession>
<sequence length="142" mass="16717">MSYWLCITNRDNWKVVKEKNVWGVPRRHENTMKRVKPGDKLVFYVKQESRKGEVLEPMIVGIFEVVSEPYSDSTKIFKSHTPGETYPIRVKIRPIKIGEVKFKPLIPKLSFIKNKKKWSGHLMGKAMREIPEEDYKLIESLL</sequence>